<evidence type="ECO:0000250" key="1">
    <source>
        <dbReference type="UniProtKB" id="P60487"/>
    </source>
</evidence>
<evidence type="ECO:0000250" key="2">
    <source>
        <dbReference type="UniProtKB" id="Q8CHP8"/>
    </source>
</evidence>
<evidence type="ECO:0000269" key="3">
    <source>
    </source>
</evidence>
<evidence type="ECO:0000269" key="4">
    <source>
    </source>
</evidence>
<evidence type="ECO:0000303" key="5">
    <source>
    </source>
</evidence>
<evidence type="ECO:0000303" key="6">
    <source>
    </source>
</evidence>
<evidence type="ECO:0000305" key="7"/>
<evidence type="ECO:0000312" key="8">
    <source>
        <dbReference type="HGNC" id="HGNC:8909"/>
    </source>
</evidence>
<accession>A6NDG6</accession>
<gene>
    <name evidence="8" type="primary">PGP</name>
</gene>
<keyword id="KW-0119">Carbohydrate metabolism</keyword>
<keyword id="KW-0378">Hydrolase</keyword>
<keyword id="KW-0460">Magnesium</keyword>
<keyword id="KW-0479">Metal-binding</keyword>
<keyword id="KW-0904">Protein phosphatase</keyword>
<keyword id="KW-1267">Proteomics identification</keyword>
<keyword id="KW-1185">Reference proteome</keyword>
<sequence>MAAAEAGGDDARCVRLSAERAQALLADVDTLLFDCDGVLWRGETAVPGAPEALRALRARGKRLGFITNNSSKTRAAYAEKLRRLGFGGPAGPGASLEVFGTAYCTALYLRQRLAGAPAPKAYVLGSPALAAELEAVGVASVGVGPEPLQGEGPGDWLHAPLEPDVRAVVVGFDPHFSYMKLTKALRYLQQPGCLLVGTNMDNRLPLENGRFIAGTGCLVRAVEMAAQRQADIIGKPSRFIFDCVSQEYGINPERTVMVGDRLDTDILLGATCGLKTILTLTGVSTLGDVKNNQESDCVSKKKMVPDFYVDSIADLLPALQG</sequence>
<proteinExistence type="evidence at protein level"/>
<organism>
    <name type="scientific">Homo sapiens</name>
    <name type="common">Human</name>
    <dbReference type="NCBI Taxonomy" id="9606"/>
    <lineage>
        <taxon>Eukaryota</taxon>
        <taxon>Metazoa</taxon>
        <taxon>Chordata</taxon>
        <taxon>Craniata</taxon>
        <taxon>Vertebrata</taxon>
        <taxon>Euteleostomi</taxon>
        <taxon>Mammalia</taxon>
        <taxon>Eutheria</taxon>
        <taxon>Euarchontoglires</taxon>
        <taxon>Primates</taxon>
        <taxon>Haplorrhini</taxon>
        <taxon>Catarrhini</taxon>
        <taxon>Hominidae</taxon>
        <taxon>Homo</taxon>
    </lineage>
</organism>
<feature type="chain" id="PRO_0000316888" description="Glycerol-3-phosphate phosphatase">
    <location>
        <begin position="1"/>
        <end position="321"/>
    </location>
</feature>
<feature type="active site" description="Nucleophile" evidence="2">
    <location>
        <position position="34"/>
    </location>
</feature>
<feature type="active site" description="Proton donor" evidence="2">
    <location>
        <position position="36"/>
    </location>
</feature>
<feature type="binding site" evidence="1">
    <location>
        <position position="34"/>
    </location>
    <ligand>
        <name>Mg(2+)</name>
        <dbReference type="ChEBI" id="CHEBI:18420"/>
    </ligand>
</feature>
<feature type="binding site" evidence="1">
    <location>
        <position position="36"/>
    </location>
    <ligand>
        <name>Mg(2+)</name>
        <dbReference type="ChEBI" id="CHEBI:18420"/>
    </ligand>
</feature>
<feature type="binding site" evidence="1">
    <location>
        <position position="260"/>
    </location>
    <ligand>
        <name>Mg(2+)</name>
        <dbReference type="ChEBI" id="CHEBI:18420"/>
    </ligand>
</feature>
<feature type="site" description="Important for substrate specificity" evidence="2">
    <location>
        <position position="204"/>
    </location>
</feature>
<protein>
    <recommendedName>
        <fullName evidence="7">Glycerol-3-phosphate phosphatase</fullName>
        <shortName evidence="6">G3PP</shortName>
        <ecNumber evidence="4">3.1.3.21</ecNumber>
    </recommendedName>
    <alternativeName>
        <fullName evidence="6">Aspartate-based ubiquitous Mg(2+)-dependent phosphatase</fullName>
        <shortName evidence="6">AUM</shortName>
        <ecNumber evidence="2">3.1.3.48</ecNumber>
    </alternativeName>
    <alternativeName>
        <fullName evidence="5">Phosphoglycolate phosphatase</fullName>
        <shortName evidence="5">PGP</shortName>
    </alternativeName>
</protein>
<comment type="function">
    <text evidence="2 4">Glycerol-3-phosphate phosphatase hydrolyzing glycerol-3-phosphate into glycerol. Thereby, regulates the cellular levels of glycerol-3-phosphate a metabolic intermediate of glucose, lipid and energy metabolism. Was also shown to have a 2-phosphoglycolate phosphatase activity and a tyrosine-protein phosphatase activity. However, their physiological relevance is unclear (PubMed:26755581). In vitro, also has a phosphatase activity toward ADP, ATP, GDP and GTP (By similarity).</text>
</comment>
<comment type="catalytic activity">
    <reaction evidence="2">
        <text>O-phospho-L-tyrosyl-[protein] + H2O = L-tyrosyl-[protein] + phosphate</text>
        <dbReference type="Rhea" id="RHEA:10684"/>
        <dbReference type="Rhea" id="RHEA-COMP:10136"/>
        <dbReference type="Rhea" id="RHEA-COMP:20101"/>
        <dbReference type="ChEBI" id="CHEBI:15377"/>
        <dbReference type="ChEBI" id="CHEBI:43474"/>
        <dbReference type="ChEBI" id="CHEBI:46858"/>
        <dbReference type="ChEBI" id="CHEBI:61978"/>
        <dbReference type="EC" id="3.1.3.48"/>
    </reaction>
</comment>
<comment type="catalytic activity">
    <reaction evidence="4">
        <text>sn-glycerol 1-phosphate + H2O = glycerol + phosphate</text>
        <dbReference type="Rhea" id="RHEA:46084"/>
        <dbReference type="ChEBI" id="CHEBI:15377"/>
        <dbReference type="ChEBI" id="CHEBI:17754"/>
        <dbReference type="ChEBI" id="CHEBI:43474"/>
        <dbReference type="ChEBI" id="CHEBI:57685"/>
        <dbReference type="EC" id="3.1.3.21"/>
    </reaction>
</comment>
<comment type="catalytic activity">
    <reaction evidence="4">
        <text>sn-glycerol 3-phosphate + H2O = glycerol + phosphate</text>
        <dbReference type="Rhea" id="RHEA:66372"/>
        <dbReference type="ChEBI" id="CHEBI:15377"/>
        <dbReference type="ChEBI" id="CHEBI:17754"/>
        <dbReference type="ChEBI" id="CHEBI:43474"/>
        <dbReference type="ChEBI" id="CHEBI:57597"/>
        <dbReference type="EC" id="3.1.3.21"/>
    </reaction>
</comment>
<comment type="cofactor">
    <cofactor evidence="2">
        <name>Mg(2+)</name>
        <dbReference type="ChEBI" id="CHEBI:18420"/>
    </cofactor>
    <text evidence="2">Binds 1 Mg(2+) ion per subunit.</text>
</comment>
<comment type="biophysicochemical properties">
    <kinetics>
        <KM evidence="4">1.4 mM for glycerol-3-phosphate</KM>
        <KM evidence="4">1.5 mM for 2-phosphoglycolate</KM>
        <Vmax evidence="4">100.0 nmol/min/mg enzyme with glycerol-3-phosphate as substrate</Vmax>
        <Vmax evidence="4">500.0 nmol/min/mg enzyme with 2-phosphoglycolate as substrate</Vmax>
        <text evidence="4">Given the respective intracellular concentrations of glycerol-3-phosphate and 2-phosphoglycolate, glycerol-3-phosphate with a concentration of 2 to 10 mM is most probably the physiological substrate.</text>
    </kinetics>
</comment>
<comment type="subunit">
    <text evidence="2">Homodimer.</text>
</comment>
<comment type="tissue specificity">
    <text evidence="3">Detected in all tissues including red cells, lymphocytes and cultured fibroblasts (at protein level). The highest activities occur in skeletal muscle and cardiac muscle.</text>
</comment>
<comment type="similarity">
    <text evidence="7">Belongs to the HAD-like hydrolase superfamily. CbbY/CbbZ/Gph/YieH family.</text>
</comment>
<name>PGP_HUMAN</name>
<dbReference type="EC" id="3.1.3.21" evidence="4"/>
<dbReference type="EC" id="3.1.3.48" evidence="2"/>
<dbReference type="EMBL" id="AC009065">
    <property type="status" value="NOT_ANNOTATED_CDS"/>
    <property type="molecule type" value="Genomic_DNA"/>
</dbReference>
<dbReference type="EMBL" id="CH471112">
    <property type="protein sequence ID" value="EAW85534.1"/>
    <property type="molecule type" value="Genomic_DNA"/>
</dbReference>
<dbReference type="CCDS" id="CCDS42104.1"/>
<dbReference type="RefSeq" id="NP_001035830.1">
    <property type="nucleotide sequence ID" value="NM_001042371.3"/>
</dbReference>
<dbReference type="SMR" id="A6NDG6"/>
<dbReference type="BioGRID" id="129694">
    <property type="interactions" value="31"/>
</dbReference>
<dbReference type="FunCoup" id="A6NDG6">
    <property type="interactions" value="983"/>
</dbReference>
<dbReference type="IntAct" id="A6NDG6">
    <property type="interactions" value="11"/>
</dbReference>
<dbReference type="MINT" id="A6NDG6"/>
<dbReference type="STRING" id="9606.ENSP00000330918"/>
<dbReference type="DEPOD" id="PGP"/>
<dbReference type="GlyGen" id="A6NDG6">
    <property type="glycosylation" value="1 site, 1 O-linked glycan (1 site)"/>
</dbReference>
<dbReference type="iPTMnet" id="A6NDG6"/>
<dbReference type="MetOSite" id="A6NDG6"/>
<dbReference type="PhosphoSitePlus" id="A6NDG6"/>
<dbReference type="SwissPalm" id="A6NDG6"/>
<dbReference type="BioMuta" id="PGP"/>
<dbReference type="jPOST" id="A6NDG6"/>
<dbReference type="MassIVE" id="A6NDG6"/>
<dbReference type="PaxDb" id="9606-ENSP00000330918"/>
<dbReference type="PeptideAtlas" id="A6NDG6"/>
<dbReference type="ProteomicsDB" id="907"/>
<dbReference type="Pumba" id="A6NDG6"/>
<dbReference type="Antibodypedia" id="54763">
    <property type="antibodies" value="148 antibodies from 23 providers"/>
</dbReference>
<dbReference type="DNASU" id="283871"/>
<dbReference type="Ensembl" id="ENST00000333503.8">
    <property type="protein sequence ID" value="ENSP00000330918.7"/>
    <property type="gene ID" value="ENSG00000184207.9"/>
</dbReference>
<dbReference type="GeneID" id="283871"/>
<dbReference type="KEGG" id="hsa:283871"/>
<dbReference type="MANE-Select" id="ENST00000333503.8">
    <property type="protein sequence ID" value="ENSP00000330918.7"/>
    <property type="RefSeq nucleotide sequence ID" value="NM_001042371.3"/>
    <property type="RefSeq protein sequence ID" value="NP_001035830.1"/>
</dbReference>
<dbReference type="UCSC" id="uc002cpk.2">
    <property type="organism name" value="human"/>
</dbReference>
<dbReference type="AGR" id="HGNC:8909"/>
<dbReference type="CTD" id="283871"/>
<dbReference type="DisGeNET" id="283871"/>
<dbReference type="GeneCards" id="PGP"/>
<dbReference type="HGNC" id="HGNC:8909">
    <property type="gene designation" value="PGP"/>
</dbReference>
<dbReference type="HPA" id="ENSG00000184207">
    <property type="expression patterns" value="Tissue enhanced (brain, testis)"/>
</dbReference>
<dbReference type="MIM" id="172280">
    <property type="type" value="gene"/>
</dbReference>
<dbReference type="neXtProt" id="NX_A6NDG6"/>
<dbReference type="OpenTargets" id="ENSG00000184207"/>
<dbReference type="PharmGKB" id="PA33246"/>
<dbReference type="VEuPathDB" id="HostDB:ENSG00000184207"/>
<dbReference type="eggNOG" id="KOG2882">
    <property type="taxonomic scope" value="Eukaryota"/>
</dbReference>
<dbReference type="GeneTree" id="ENSGT00940000160577"/>
<dbReference type="HOGENOM" id="CLU_043473_0_1_1"/>
<dbReference type="InParanoid" id="A6NDG6"/>
<dbReference type="OMA" id="PPMHRET"/>
<dbReference type="OrthoDB" id="413953at2759"/>
<dbReference type="PAN-GO" id="A6NDG6">
    <property type="GO annotations" value="2 GO annotations based on evolutionary models"/>
</dbReference>
<dbReference type="PhylomeDB" id="A6NDG6"/>
<dbReference type="TreeFam" id="TF314344"/>
<dbReference type="PathwayCommons" id="A6NDG6"/>
<dbReference type="Reactome" id="R-HSA-70171">
    <property type="pathway name" value="Glycolysis"/>
</dbReference>
<dbReference type="SignaLink" id="A6NDG6"/>
<dbReference type="BioGRID-ORCS" id="283871">
    <property type="hits" value="89 hits in 1171 CRISPR screens"/>
</dbReference>
<dbReference type="ChiTaRS" id="PGP">
    <property type="organism name" value="human"/>
</dbReference>
<dbReference type="GenomeRNAi" id="283871"/>
<dbReference type="Pharos" id="A6NDG6">
    <property type="development level" value="Tbio"/>
</dbReference>
<dbReference type="PRO" id="PR:A6NDG6"/>
<dbReference type="Proteomes" id="UP000005640">
    <property type="component" value="Chromosome 16"/>
</dbReference>
<dbReference type="RNAct" id="A6NDG6">
    <property type="molecule type" value="protein"/>
</dbReference>
<dbReference type="Bgee" id="ENSG00000184207">
    <property type="expression patterns" value="Expressed in tibialis anterior and 176 other cell types or tissues"/>
</dbReference>
<dbReference type="ExpressionAtlas" id="A6NDG6">
    <property type="expression patterns" value="baseline and differential"/>
</dbReference>
<dbReference type="GO" id="GO:0005737">
    <property type="term" value="C:cytoplasm"/>
    <property type="evidence" value="ECO:0000318"/>
    <property type="project" value="GO_Central"/>
</dbReference>
<dbReference type="GO" id="GO:0043262">
    <property type="term" value="F:ADP phosphatase activity"/>
    <property type="evidence" value="ECO:0007669"/>
    <property type="project" value="Ensembl"/>
</dbReference>
<dbReference type="GO" id="GO:0000121">
    <property type="term" value="F:glycerol-1-phosphatase activity"/>
    <property type="evidence" value="ECO:0007669"/>
    <property type="project" value="RHEA"/>
</dbReference>
<dbReference type="GO" id="GO:0043136">
    <property type="term" value="F:glycerol-3-phosphatase activity"/>
    <property type="evidence" value="ECO:0000314"/>
    <property type="project" value="UniProtKB"/>
</dbReference>
<dbReference type="GO" id="GO:0000287">
    <property type="term" value="F:magnesium ion binding"/>
    <property type="evidence" value="ECO:0000250"/>
    <property type="project" value="UniProtKB"/>
</dbReference>
<dbReference type="GO" id="GO:0008967">
    <property type="term" value="F:phosphoglycolate phosphatase activity"/>
    <property type="evidence" value="ECO:0000314"/>
    <property type="project" value="UniProtKB"/>
</dbReference>
<dbReference type="GO" id="GO:0004725">
    <property type="term" value="F:protein tyrosine phosphatase activity"/>
    <property type="evidence" value="ECO:0000250"/>
    <property type="project" value="UniProtKB"/>
</dbReference>
<dbReference type="GO" id="GO:0006114">
    <property type="term" value="P:glycerol biosynthetic process"/>
    <property type="evidence" value="ECO:0000314"/>
    <property type="project" value="UniProtKB"/>
</dbReference>
<dbReference type="GO" id="GO:0006650">
    <property type="term" value="P:glycerophospholipid metabolic process"/>
    <property type="evidence" value="ECO:0000314"/>
    <property type="project" value="UniProtKB"/>
</dbReference>
<dbReference type="GO" id="GO:0045721">
    <property type="term" value="P:negative regulation of gluconeogenesis"/>
    <property type="evidence" value="ECO:0000315"/>
    <property type="project" value="UniProtKB"/>
</dbReference>
<dbReference type="CDD" id="cd07510">
    <property type="entry name" value="HAD_Pase_UmpH-like"/>
    <property type="match status" value="1"/>
</dbReference>
<dbReference type="FunFam" id="3.40.50.1000:FF:000123">
    <property type="entry name" value="glycerol-3-phosphate phosphatase"/>
    <property type="match status" value="1"/>
</dbReference>
<dbReference type="Gene3D" id="3.40.50.1000">
    <property type="entry name" value="HAD superfamily/HAD-like"/>
    <property type="match status" value="2"/>
</dbReference>
<dbReference type="InterPro" id="IPR036412">
    <property type="entry name" value="HAD-like_sf"/>
</dbReference>
<dbReference type="InterPro" id="IPR006357">
    <property type="entry name" value="HAD-SF_hydro_IIA"/>
</dbReference>
<dbReference type="InterPro" id="IPR023214">
    <property type="entry name" value="HAD_sf"/>
</dbReference>
<dbReference type="InterPro" id="IPR006349">
    <property type="entry name" value="PGP_euk"/>
</dbReference>
<dbReference type="NCBIfam" id="TIGR01460">
    <property type="entry name" value="HAD-SF-IIA"/>
    <property type="match status" value="1"/>
</dbReference>
<dbReference type="NCBIfam" id="TIGR01452">
    <property type="entry name" value="PGP_euk"/>
    <property type="match status" value="1"/>
</dbReference>
<dbReference type="PANTHER" id="PTHR19288">
    <property type="entry name" value="4-NITROPHENYLPHOSPHATASE-RELATED"/>
    <property type="match status" value="1"/>
</dbReference>
<dbReference type="PANTHER" id="PTHR19288:SF92">
    <property type="entry name" value="GLYCEROL-3-PHOSPHATE PHOSPHATASE"/>
    <property type="match status" value="1"/>
</dbReference>
<dbReference type="Pfam" id="PF13344">
    <property type="entry name" value="Hydrolase_6"/>
    <property type="match status" value="1"/>
</dbReference>
<dbReference type="Pfam" id="PF13242">
    <property type="entry name" value="Hydrolase_like"/>
    <property type="match status" value="1"/>
</dbReference>
<dbReference type="PIRSF" id="PIRSF000915">
    <property type="entry name" value="PGP-type_phosphatase"/>
    <property type="match status" value="1"/>
</dbReference>
<dbReference type="SUPFAM" id="SSF56784">
    <property type="entry name" value="HAD-like"/>
    <property type="match status" value="1"/>
</dbReference>
<reference key="1">
    <citation type="journal article" date="2004" name="Nature">
        <title>The sequence and analysis of duplication-rich human chromosome 16.</title>
        <authorList>
            <person name="Martin J."/>
            <person name="Han C."/>
            <person name="Gordon L.A."/>
            <person name="Terry A."/>
            <person name="Prabhakar S."/>
            <person name="She X."/>
            <person name="Xie G."/>
            <person name="Hellsten U."/>
            <person name="Chan Y.M."/>
            <person name="Altherr M."/>
            <person name="Couronne O."/>
            <person name="Aerts A."/>
            <person name="Bajorek E."/>
            <person name="Black S."/>
            <person name="Blumer H."/>
            <person name="Branscomb E."/>
            <person name="Brown N.C."/>
            <person name="Bruno W.J."/>
            <person name="Buckingham J.M."/>
            <person name="Callen D.F."/>
            <person name="Campbell C.S."/>
            <person name="Campbell M.L."/>
            <person name="Campbell E.W."/>
            <person name="Caoile C."/>
            <person name="Challacombe J.F."/>
            <person name="Chasteen L.A."/>
            <person name="Chertkov O."/>
            <person name="Chi H.C."/>
            <person name="Christensen M."/>
            <person name="Clark L.M."/>
            <person name="Cohn J.D."/>
            <person name="Denys M."/>
            <person name="Detter J.C."/>
            <person name="Dickson M."/>
            <person name="Dimitrijevic-Bussod M."/>
            <person name="Escobar J."/>
            <person name="Fawcett J.J."/>
            <person name="Flowers D."/>
            <person name="Fotopulos D."/>
            <person name="Glavina T."/>
            <person name="Gomez M."/>
            <person name="Gonzales E."/>
            <person name="Goodstein D."/>
            <person name="Goodwin L.A."/>
            <person name="Grady D.L."/>
            <person name="Grigoriev I."/>
            <person name="Groza M."/>
            <person name="Hammon N."/>
            <person name="Hawkins T."/>
            <person name="Haydu L."/>
            <person name="Hildebrand C.E."/>
            <person name="Huang W."/>
            <person name="Israni S."/>
            <person name="Jett J."/>
            <person name="Jewett P.B."/>
            <person name="Kadner K."/>
            <person name="Kimball H."/>
            <person name="Kobayashi A."/>
            <person name="Krawczyk M.-C."/>
            <person name="Leyba T."/>
            <person name="Longmire J.L."/>
            <person name="Lopez F."/>
            <person name="Lou Y."/>
            <person name="Lowry S."/>
            <person name="Ludeman T."/>
            <person name="Manohar C.F."/>
            <person name="Mark G.A."/>
            <person name="McMurray K.L."/>
            <person name="Meincke L.J."/>
            <person name="Morgan J."/>
            <person name="Moyzis R.K."/>
            <person name="Mundt M.O."/>
            <person name="Munk A.C."/>
            <person name="Nandkeshwar R.D."/>
            <person name="Pitluck S."/>
            <person name="Pollard M."/>
            <person name="Predki P."/>
            <person name="Parson-Quintana B."/>
            <person name="Ramirez L."/>
            <person name="Rash S."/>
            <person name="Retterer J."/>
            <person name="Ricke D.O."/>
            <person name="Robinson D.L."/>
            <person name="Rodriguez A."/>
            <person name="Salamov A."/>
            <person name="Saunders E.H."/>
            <person name="Scott D."/>
            <person name="Shough T."/>
            <person name="Stallings R.L."/>
            <person name="Stalvey M."/>
            <person name="Sutherland R.D."/>
            <person name="Tapia R."/>
            <person name="Tesmer J.G."/>
            <person name="Thayer N."/>
            <person name="Thompson L.S."/>
            <person name="Tice H."/>
            <person name="Torney D.C."/>
            <person name="Tran-Gyamfi M."/>
            <person name="Tsai M."/>
            <person name="Ulanovsky L.E."/>
            <person name="Ustaszewska A."/>
            <person name="Vo N."/>
            <person name="White P.S."/>
            <person name="Williams A.L."/>
            <person name="Wills P.L."/>
            <person name="Wu J.-R."/>
            <person name="Wu K."/>
            <person name="Yang J."/>
            <person name="DeJong P."/>
            <person name="Bruce D."/>
            <person name="Doggett N.A."/>
            <person name="Deaven L."/>
            <person name="Schmutz J."/>
            <person name="Grimwood J."/>
            <person name="Richardson P."/>
            <person name="Rokhsar D.S."/>
            <person name="Eichler E.E."/>
            <person name="Gilna P."/>
            <person name="Lucas S.M."/>
            <person name="Myers R.M."/>
            <person name="Rubin E.M."/>
            <person name="Pennacchio L.A."/>
        </authorList>
    </citation>
    <scope>NUCLEOTIDE SEQUENCE [LARGE SCALE GENOMIC DNA]</scope>
</reference>
<reference key="2">
    <citation type="submission" date="2005-09" db="EMBL/GenBank/DDBJ databases">
        <authorList>
            <person name="Mural R.J."/>
            <person name="Istrail S."/>
            <person name="Sutton G.G."/>
            <person name="Florea L."/>
            <person name="Halpern A.L."/>
            <person name="Mobarry C.M."/>
            <person name="Lippert R."/>
            <person name="Walenz B."/>
            <person name="Shatkay H."/>
            <person name="Dew I."/>
            <person name="Miller J.R."/>
            <person name="Flanigan M.J."/>
            <person name="Edwards N.J."/>
            <person name="Bolanos R."/>
            <person name="Fasulo D."/>
            <person name="Halldorsson B.V."/>
            <person name="Hannenhalli S."/>
            <person name="Turner R."/>
            <person name="Yooseph S."/>
            <person name="Lu F."/>
            <person name="Nusskern D.R."/>
            <person name="Shue B.C."/>
            <person name="Zheng X.H."/>
            <person name="Zhong F."/>
            <person name="Delcher A.L."/>
            <person name="Huson D.H."/>
            <person name="Kravitz S.A."/>
            <person name="Mouchard L."/>
            <person name="Reinert K."/>
            <person name="Remington K.A."/>
            <person name="Clark A.G."/>
            <person name="Waterman M.S."/>
            <person name="Eichler E.E."/>
            <person name="Adams M.D."/>
            <person name="Hunkapiller M.W."/>
            <person name="Myers E.W."/>
            <person name="Venter J.C."/>
        </authorList>
    </citation>
    <scope>NUCLEOTIDE SEQUENCE [LARGE SCALE GENOMIC DNA]</scope>
</reference>
<reference key="3">
    <citation type="journal article" date="1978" name="Ann. Hum. Genet.">
        <title>Genetic polymorphism of human phosphoglycolate phosphatase (PGP).</title>
        <authorList>
            <person name="Barker R.F."/>
            <person name="Hopkinson D.A."/>
        </authorList>
    </citation>
    <scope>TISSUE SPECIFICITY</scope>
</reference>
<reference key="4">
    <citation type="journal article" date="2011" name="BMC Syst. Biol.">
        <title>Initial characterization of the human central proteome.</title>
        <authorList>
            <person name="Burkard T.R."/>
            <person name="Planyavsky M."/>
            <person name="Kaupe I."/>
            <person name="Breitwieser F.P."/>
            <person name="Buerckstuemmer T."/>
            <person name="Bennett K.L."/>
            <person name="Superti-Furga G."/>
            <person name="Colinge J."/>
        </authorList>
    </citation>
    <scope>IDENTIFICATION BY MASS SPECTROMETRY [LARGE SCALE ANALYSIS]</scope>
</reference>
<reference key="5">
    <citation type="journal article" date="2016" name="Proc. Natl. Acad. Sci. U.S.A.">
        <title>Identification of a mammalian glycerol-3-phosphate phosphatase: Role in metabolism and signaling in pancreatic beta-cells and hepatocytes.</title>
        <authorList>
            <person name="Mugabo Y."/>
            <person name="Zhao S."/>
            <person name="Seifried A."/>
            <person name="Gezzar S."/>
            <person name="Al-Mass A."/>
            <person name="Zhang D."/>
            <person name="Lamontagne J."/>
            <person name="Attane C."/>
            <person name="Poursharifi P."/>
            <person name="Iglesias J."/>
            <person name="Joly E."/>
            <person name="Peyot M.L."/>
            <person name="Gohla A."/>
            <person name="Madiraju S.R."/>
            <person name="Prentki M."/>
        </authorList>
    </citation>
    <scope>FUNCTION</scope>
    <scope>CATALYTIC ACTIVITY</scope>
    <scope>BIOPHYSICOCHEMICAL PROPERTIES</scope>
</reference>